<evidence type="ECO:0000250" key="1">
    <source>
        <dbReference type="UniProtKB" id="P28839"/>
    </source>
</evidence>
<evidence type="ECO:0000250" key="2">
    <source>
        <dbReference type="UniProtKB" id="Q10712"/>
    </source>
</evidence>
<evidence type="ECO:0000255" key="3"/>
<evidence type="ECO:0000269" key="4">
    <source>
    </source>
</evidence>
<evidence type="ECO:0000269" key="5">
    <source>
    </source>
</evidence>
<evidence type="ECO:0000269" key="6">
    <source>
    </source>
</evidence>
<evidence type="ECO:0000269" key="7">
    <source>
    </source>
</evidence>
<evidence type="ECO:0000303" key="8">
    <source>
    </source>
</evidence>
<evidence type="ECO:0000303" key="9">
    <source>
    </source>
</evidence>
<evidence type="ECO:0000305" key="10"/>
<evidence type="ECO:0000312" key="11">
    <source>
        <dbReference type="EMBL" id="CAA69614.1"/>
    </source>
</evidence>
<feature type="transit peptide" description="Chloroplast" evidence="3">
    <location>
        <begin position="1"/>
        <end position="42"/>
    </location>
</feature>
<feature type="chain" id="PRO_0000461314" description="Leucine aminopeptidase A2, chloroplastic">
    <location>
        <begin position="43"/>
        <end position="571"/>
    </location>
</feature>
<feature type="active site" evidence="3">
    <location>
        <position position="354"/>
    </location>
</feature>
<feature type="active site" evidence="3">
    <location>
        <position position="431"/>
    </location>
</feature>
<feature type="binding site" evidence="2">
    <location>
        <position position="342"/>
    </location>
    <ligand>
        <name>Mg(2+)</name>
        <dbReference type="ChEBI" id="CHEBI:18420"/>
        <label>1</label>
    </ligand>
</feature>
<feature type="binding site" evidence="2">
    <location>
        <position position="347"/>
    </location>
    <ligand>
        <name>Mg(2+)</name>
        <dbReference type="ChEBI" id="CHEBI:18420"/>
        <label>1</label>
    </ligand>
</feature>
<feature type="binding site" evidence="2">
    <location>
        <position position="347"/>
    </location>
    <ligand>
        <name>Mg(2+)</name>
        <dbReference type="ChEBI" id="CHEBI:18420"/>
        <label>2</label>
    </ligand>
</feature>
<feature type="binding site" evidence="2">
    <location>
        <position position="367"/>
    </location>
    <ligand>
        <name>Mg(2+)</name>
        <dbReference type="ChEBI" id="CHEBI:18420"/>
        <label>1</label>
    </ligand>
</feature>
<feature type="binding site" evidence="2">
    <location>
        <position position="427"/>
    </location>
    <ligand>
        <name>Mg(2+)</name>
        <dbReference type="ChEBI" id="CHEBI:18420"/>
        <label>2</label>
    </ligand>
</feature>
<feature type="binding site" evidence="2">
    <location>
        <position position="429"/>
    </location>
    <ligand>
        <name>Mg(2+)</name>
        <dbReference type="ChEBI" id="CHEBI:18420"/>
        <label>1</label>
    </ligand>
</feature>
<feature type="binding site" evidence="2">
    <location>
        <position position="429"/>
    </location>
    <ligand>
        <name>Mg(2+)</name>
        <dbReference type="ChEBI" id="CHEBI:18420"/>
        <label>2</label>
    </ligand>
</feature>
<comment type="function">
    <text evidence="2 10">Catalyzes the removal of unsubstituted N-terminal amino acids from various peptides (By similarity). When associated as homohexamer, catalyzes the proteolyzes of Xaa-Leu dipeptides (By similarity). Possesses leucine aminopeptidase activity against the model substrate leucine-amido methyl coumarin (By similarity). Presumably involved in the processing and regular turnover of intracellular proteins (Probable). Regulates wound signaling and has a role in insect defense (By similarity).</text>
</comment>
<comment type="function">
    <text evidence="2">Functions as a molecular chaperone to protect proteins from heat-induced damage.</text>
</comment>
<comment type="catalytic activity">
    <reaction evidence="2">
        <text>Release of an N-terminal amino acid, Xaa-|-Yaa-, in which Xaa is preferably Leu, but may be other amino acids including Pro although not Arg or Lys, and Yaa may be Pro. Amino acid amides and methyl esters are also readily hydrolyzed, but rates on arylamides are exceedingly low.</text>
        <dbReference type="EC" id="3.4.11.1"/>
    </reaction>
</comment>
<comment type="catalytic activity">
    <reaction evidence="1">
        <text>Release of N-terminal proline from a peptide.</text>
        <dbReference type="EC" id="3.4.11.5"/>
    </reaction>
</comment>
<comment type="cofactor">
    <cofactor evidence="2">
        <name>Mg(2+)</name>
        <dbReference type="ChEBI" id="CHEBI:18420"/>
    </cofactor>
    <text evidence="2">Binds 2 Mg(2+) ions per subunit.</text>
</comment>
<comment type="subunit">
    <text evidence="2">Homohexamer (dimer of homotrimers).</text>
</comment>
<comment type="subcellular location">
    <subcellularLocation>
        <location evidence="3">Plastid</location>
        <location evidence="3">Chloroplast</location>
    </subcellularLocation>
</comment>
<comment type="tissue specificity">
    <text evidence="5 6 7">Expressed during floral development (PubMed:11204785, PubMed:9526496). Expressed in healthy and senescent leaves, cotyledons (emergence from seed coats), pistils, sepals, petals, stamens, and floral buds (at protein level) (PubMed:12746529).</text>
</comment>
<comment type="developmental stage">
    <text evidence="6">Expressed in cotyledons during seedlings development four days after emergence from seed coats (at protein level).</text>
</comment>
<comment type="induction">
    <text evidence="4 5 7">Induced by wounding (PubMed:10787049, PubMed:11204785, PubMed:9526496). Accumulates upon infection by the pathogenic bacteria P.syringae pv. tomato (PubMed:10787049, PubMed:11204785). Triggered by insect infestation (e.g. larvae of M.sexta) (PubMed:11204785). Activated by the wound signal molecules abscisic acid (ABA) and jasmonic acid (JA) (PubMed:9526496).</text>
</comment>
<comment type="similarity">
    <text evidence="10">Belongs to the peptidase M17 family.</text>
</comment>
<sequence>MATLRVSSLFASSSSSLHSNPSVFTKYQSSPKWAFSFPVTPLCSKRSKRIVHCIAGDTLGLTRPNESDAPKISIGAKDTAVVQWQGDLLAIGATENDMARDENSKFKNPLLQQLDSELNGLLSAASSEEDFSGKSGQSVNLRFPGGRISLVGLGSSASSPTSYHSLGQAAAAAARSSQARNIAVALASTDGLSAESKINSASAIATGVVLGSFEDNRFRSESKKSTLESLDILGLGTGPEIERKIKYAEHVCAGVILGRELVNAPANIVTPAVLAEEAKKIASTYSDVISVNILDAEQCKELKMGAYLAVAAAATENPPYFIHLCFKTPTKERKTKLALVGKGLTFDSGGYNLKVGAGSRIELMKNDMGGAAAVLGAAKALGEIRPSRVEVHFIVAACENMISAEGMRPGDIVTASNGKTIEVNNTDAEGRLTLADALIYACNQGVEKIIDLATLTGAIMVALGPSVAGAFTPNDGLANEVVAAAEASGEKLWRMPMEESYWESMKSGVADMINLGPGNGGAITGALFLKQFVDEKVQWLHLDVAGPVWSDEKKNATGYGVSTLVEWVLRN</sequence>
<name>AMPL2_SOLLC</name>
<dbReference type="EC" id="3.4.11.1" evidence="2"/>
<dbReference type="EC" id="3.4.11.5"/>
<dbReference type="EMBL" id="Y08305">
    <property type="protein sequence ID" value="CAA69614.1"/>
    <property type="molecule type" value="Genomic_DNA"/>
</dbReference>
<dbReference type="PIR" id="T07047">
    <property type="entry name" value="T07047"/>
</dbReference>
<dbReference type="SMR" id="O24022"/>
<dbReference type="MEROPS" id="M17.002"/>
<dbReference type="PaxDb" id="4081-Solyc12g010030-1-1"/>
<dbReference type="Proteomes" id="UP000004994">
    <property type="component" value="Chromosome 12"/>
</dbReference>
<dbReference type="ExpressionAtlas" id="O24022">
    <property type="expression patterns" value="baseline and differential"/>
</dbReference>
<dbReference type="GO" id="GO:0009507">
    <property type="term" value="C:chloroplast"/>
    <property type="evidence" value="ECO:0007669"/>
    <property type="project" value="UniProtKB-SubCell"/>
</dbReference>
<dbReference type="GO" id="GO:0042802">
    <property type="term" value="F:identical protein binding"/>
    <property type="evidence" value="ECO:0000250"/>
    <property type="project" value="UniProtKB"/>
</dbReference>
<dbReference type="GO" id="GO:0030145">
    <property type="term" value="F:manganese ion binding"/>
    <property type="evidence" value="ECO:0007669"/>
    <property type="project" value="InterPro"/>
</dbReference>
<dbReference type="GO" id="GO:0070006">
    <property type="term" value="F:metalloaminopeptidase activity"/>
    <property type="evidence" value="ECO:0007669"/>
    <property type="project" value="InterPro"/>
</dbReference>
<dbReference type="GO" id="GO:0044183">
    <property type="term" value="F:protein folding chaperone"/>
    <property type="evidence" value="ECO:0000250"/>
    <property type="project" value="UniProtKB"/>
</dbReference>
<dbReference type="GO" id="GO:0034605">
    <property type="term" value="P:cellular response to heat"/>
    <property type="evidence" value="ECO:0000250"/>
    <property type="project" value="UniProtKB"/>
</dbReference>
<dbReference type="GO" id="GO:0009908">
    <property type="term" value="P:flower development"/>
    <property type="evidence" value="ECO:0000270"/>
    <property type="project" value="UniProtKB"/>
</dbReference>
<dbReference type="GO" id="GO:0034214">
    <property type="term" value="P:protein hexamerization"/>
    <property type="evidence" value="ECO:0000250"/>
    <property type="project" value="UniProtKB"/>
</dbReference>
<dbReference type="GO" id="GO:0006508">
    <property type="term" value="P:proteolysis"/>
    <property type="evidence" value="ECO:0007669"/>
    <property type="project" value="UniProtKB-KW"/>
</dbReference>
<dbReference type="GO" id="GO:0009737">
    <property type="term" value="P:response to abscisic acid"/>
    <property type="evidence" value="ECO:0000270"/>
    <property type="project" value="UniProtKB"/>
</dbReference>
<dbReference type="GO" id="GO:0009617">
    <property type="term" value="P:response to bacterium"/>
    <property type="evidence" value="ECO:0000270"/>
    <property type="project" value="UniProtKB"/>
</dbReference>
<dbReference type="GO" id="GO:0009625">
    <property type="term" value="P:response to insect"/>
    <property type="evidence" value="ECO:0000270"/>
    <property type="project" value="UniProtKB"/>
</dbReference>
<dbReference type="GO" id="GO:0009753">
    <property type="term" value="P:response to jasmonic acid"/>
    <property type="evidence" value="ECO:0000270"/>
    <property type="project" value="UniProtKB"/>
</dbReference>
<dbReference type="GO" id="GO:0009611">
    <property type="term" value="P:response to wounding"/>
    <property type="evidence" value="ECO:0000270"/>
    <property type="project" value="UniProtKB"/>
</dbReference>
<dbReference type="CDD" id="cd00433">
    <property type="entry name" value="Peptidase_M17"/>
    <property type="match status" value="1"/>
</dbReference>
<dbReference type="FunFam" id="3.40.630.10:FF:000033">
    <property type="entry name" value="M17 leucyl aminopeptidase"/>
    <property type="match status" value="1"/>
</dbReference>
<dbReference type="Gene3D" id="3.40.220.10">
    <property type="entry name" value="Leucine Aminopeptidase, subunit E, domain 1"/>
    <property type="match status" value="1"/>
</dbReference>
<dbReference type="Gene3D" id="3.40.630.10">
    <property type="entry name" value="Zn peptidases"/>
    <property type="match status" value="1"/>
</dbReference>
<dbReference type="HAMAP" id="MF_00181">
    <property type="entry name" value="Cytosol_peptidase_M17"/>
    <property type="match status" value="1"/>
</dbReference>
<dbReference type="InterPro" id="IPR011356">
    <property type="entry name" value="Leucine_aapep/pepB"/>
</dbReference>
<dbReference type="InterPro" id="IPR043472">
    <property type="entry name" value="Macro_dom-like"/>
</dbReference>
<dbReference type="InterPro" id="IPR000819">
    <property type="entry name" value="Peptidase_M17_C"/>
</dbReference>
<dbReference type="InterPro" id="IPR023042">
    <property type="entry name" value="Peptidase_M17_leu_NH2_pept"/>
</dbReference>
<dbReference type="InterPro" id="IPR008283">
    <property type="entry name" value="Peptidase_M17_N"/>
</dbReference>
<dbReference type="NCBIfam" id="NF002076">
    <property type="entry name" value="PRK00913.2-3"/>
    <property type="match status" value="1"/>
</dbReference>
<dbReference type="PANTHER" id="PTHR11963:SF43">
    <property type="entry name" value="LEUCINE AMINOPEPTIDASE 1, CHLOROPLASTIC"/>
    <property type="match status" value="1"/>
</dbReference>
<dbReference type="PANTHER" id="PTHR11963">
    <property type="entry name" value="LEUCINE AMINOPEPTIDASE-RELATED"/>
    <property type="match status" value="1"/>
</dbReference>
<dbReference type="Pfam" id="PF00883">
    <property type="entry name" value="Peptidase_M17"/>
    <property type="match status" value="1"/>
</dbReference>
<dbReference type="Pfam" id="PF02789">
    <property type="entry name" value="Peptidase_M17_N"/>
    <property type="match status" value="1"/>
</dbReference>
<dbReference type="PRINTS" id="PR00481">
    <property type="entry name" value="LAMNOPPTDASE"/>
</dbReference>
<dbReference type="SUPFAM" id="SSF52949">
    <property type="entry name" value="Macro domain-like"/>
    <property type="match status" value="1"/>
</dbReference>
<dbReference type="SUPFAM" id="SSF53187">
    <property type="entry name" value="Zn-dependent exopeptidases"/>
    <property type="match status" value="1"/>
</dbReference>
<dbReference type="PROSITE" id="PS00631">
    <property type="entry name" value="CYTOSOL_AP"/>
    <property type="match status" value="1"/>
</dbReference>
<proteinExistence type="evidence at protein level"/>
<accession>O24022</accession>
<accession>A0A3Q7J4E5</accession>
<accession>Q96476</accession>
<organism>
    <name type="scientific">Solanum lycopersicum</name>
    <name type="common">Tomato</name>
    <name type="synonym">Lycopersicon esculentum</name>
    <dbReference type="NCBI Taxonomy" id="4081"/>
    <lineage>
        <taxon>Eukaryota</taxon>
        <taxon>Viridiplantae</taxon>
        <taxon>Streptophyta</taxon>
        <taxon>Embryophyta</taxon>
        <taxon>Tracheophyta</taxon>
        <taxon>Spermatophyta</taxon>
        <taxon>Magnoliopsida</taxon>
        <taxon>eudicotyledons</taxon>
        <taxon>Gunneridae</taxon>
        <taxon>Pentapetalae</taxon>
        <taxon>asterids</taxon>
        <taxon>lamiids</taxon>
        <taxon>Solanales</taxon>
        <taxon>Solanaceae</taxon>
        <taxon>Solanoideae</taxon>
        <taxon>Solaneae</taxon>
        <taxon>Solanum</taxon>
        <taxon>Solanum subgen. Lycopersicon</taxon>
    </lineage>
</organism>
<keyword id="KW-0031">Aminopeptidase</keyword>
<keyword id="KW-0143">Chaperone</keyword>
<keyword id="KW-0150">Chloroplast</keyword>
<keyword id="KW-0378">Hydrolase</keyword>
<keyword id="KW-0460">Magnesium</keyword>
<keyword id="KW-0479">Metal-binding</keyword>
<keyword id="KW-0934">Plastid</keyword>
<keyword id="KW-0645">Protease</keyword>
<keyword id="KW-1185">Reference proteome</keyword>
<keyword id="KW-0346">Stress response</keyword>
<keyword id="KW-0809">Transit peptide</keyword>
<protein>
    <recommendedName>
        <fullName evidence="8">Leucine aminopeptidase A2, chloroplastic</fullName>
        <shortName evidence="8">LapA2</shortName>
        <ecNumber evidence="2">3.4.11.1</ecNumber>
    </recommendedName>
    <alternativeName>
        <fullName evidence="11">Lap17.1a protein</fullName>
    </alternativeName>
    <alternativeName>
        <fullName>Leucyl aminopeptidase 2</fullName>
        <shortName>LAP 2</shortName>
    </alternativeName>
    <alternativeName>
        <fullName>Proline aminopeptidase 2</fullName>
        <ecNumber>3.4.11.5</ecNumber>
    </alternativeName>
    <alternativeName>
        <fullName>Prolyl aminopeptidase 2</fullName>
    </alternativeName>
</protein>
<reference key="1">
    <citation type="journal article" date="1998" name="Plant Mol. Biol.">
        <title>A -308 deletion of the tomato LAP promoters is able to direct flower-specific and MeJA-induced expression in transgenic plants.</title>
        <authorList>
            <person name="Ruiz-Rivero O.J."/>
            <person name="Prat S."/>
        </authorList>
    </citation>
    <scope>NUCLEOTIDE SEQUENCE [MRNA]</scope>
    <scope>INDUCTION BY WOUNDING; JASMONIC ACID AND ABSCISSIC ACID</scope>
    <scope>TISSUE SPECIFICITY</scope>
    <source>
        <strain>cv. Ailsa Craig</strain>
        <tissue>Leaf</tissue>
    </source>
</reference>
<reference key="2">
    <citation type="journal article" date="2012" name="Nature">
        <title>The tomato genome sequence provides insights into fleshy fruit evolution.</title>
        <authorList>
            <consortium name="Tomato Genome Consortium"/>
        </authorList>
    </citation>
    <scope>NUCLEOTIDE SEQUENCE [LARGE SCALE GENOMIC DNA]</scope>
    <source>
        <strain>cv. Heinz 1706</strain>
    </source>
</reference>
<reference key="3">
    <citation type="journal article" date="2000" name="Planta">
        <title>Leucine aminopeptidases: the ubiquity of LAP-N and the specificity of LAP-A.</title>
        <authorList>
            <person name="Chao W.S."/>
            <person name="Pautot V."/>
            <person name="Holzer F.M."/>
            <person name="Walling L.L."/>
        </authorList>
    </citation>
    <scope>INDUCTION BY WOUNDING AND PSEUDOMONAS SYRINGAE</scope>
    <scope>GENE FAMILY</scope>
    <scope>NOMENCLATURE</scope>
    <source>
        <strain>cv. Peto 238R</strain>
        <strain>cv. VFNT Cherry</strain>
    </source>
</reference>
<reference key="4">
    <citation type="journal article" date="2001" name="Mol. Plant Microbe Interact.">
        <title>The induction of tomato leucine aminopeptidase genes (LapA) after Pseudomonas syringae pv. tomato infection is primarily a wound response triggered by coronatine.</title>
        <authorList>
            <person name="Pautot V."/>
            <person name="Holzer F.M."/>
            <person name="Chaufaux J."/>
            <person name="Walling L.L."/>
        </authorList>
    </citation>
    <scope>TISSUE SPECIFICITY</scope>
    <scope>INDUCTION BY INSECT; WOUNDING AND PSEUDOMONAS SYRINGAE</scope>
    <source>
        <strain>cv. UC82B</strain>
    </source>
</reference>
<reference key="5">
    <citation type="journal article" date="2003" name="Plant Physiol.">
        <title>Isolation and characterization of the neutral leucine aminopeptidase (LapN) of tomato.</title>
        <authorList>
            <person name="Tu C.-J."/>
            <person name="Park S.-Y."/>
            <person name="Walling L.L."/>
        </authorList>
    </citation>
    <scope>TISSUE SPECIFICITY</scope>
    <scope>DEVELOPMENTAL STAGE</scope>
    <source>
        <strain>cv. Peto 238R</strain>
        <strain>cv. VFNT Cherry</strain>
    </source>
</reference>
<gene>
    <name evidence="8" type="primary">LAPA2</name>
    <name evidence="9" type="synonym">Lap17.1a</name>
    <name evidence="10" type="ordered locus">Solyc12g010030</name>
</gene>